<protein>
    <recommendedName>
        <fullName>CCR4-NOT transcriptional complex subunit CAF120</fullName>
    </recommendedName>
    <alternativeName>
        <fullName>120 kDa CCR4-associated factor</fullName>
    </alternativeName>
</protein>
<comment type="function">
    <text evidence="1">Acts as a component of the CCR4-NOT core complex, which in the nucleus seems to be a general transcription factor, and in the cytoplasm the major mRNA deadenylase involved in mRNA turnover. The NOT protein subcomplex negatively regulates the basal and activated transcription of many genes. Preferentially affects TC-type TATA element-dependent transcription. Could directly or indirectly inhibit component(s) of the general transcription machinery (By similarity).</text>
</comment>
<comment type="subunit">
    <text evidence="1">Subunit of the 1.0 MDa CCR4-NOT core complex that contains CCR4, CAF1, CAF120, NOT1, NOT2, NOT3, NOT4, NOT5, CAF40 and CAF130. In the complex interacts with NOT1. The core complex probably is part of a less characterized 1.9 MDa CCR4-NOT complex (By similarity).</text>
</comment>
<comment type="subcellular location">
    <subcellularLocation>
        <location evidence="1">Cytoplasm</location>
    </subcellularLocation>
    <subcellularLocation>
        <location evidence="1">Nucleus</location>
    </subcellularLocation>
    <subcellularLocation>
        <location evidence="1">Bud neck</location>
    </subcellularLocation>
</comment>
<comment type="similarity">
    <text evidence="5">Belongs to the CAF120 family.</text>
</comment>
<reference key="1">
    <citation type="journal article" date="2007" name="Proc. Natl. Acad. Sci. U.S.A.">
        <title>Genome sequencing and comparative analysis of Saccharomyces cerevisiae strain YJM789.</title>
        <authorList>
            <person name="Wei W."/>
            <person name="McCusker J.H."/>
            <person name="Hyman R.W."/>
            <person name="Jones T."/>
            <person name="Ning Y."/>
            <person name="Cao Z."/>
            <person name="Gu Z."/>
            <person name="Bruno D."/>
            <person name="Miranda M."/>
            <person name="Nguyen M."/>
            <person name="Wilhelmy J."/>
            <person name="Komp C."/>
            <person name="Tamse R."/>
            <person name="Wang X."/>
            <person name="Jia P."/>
            <person name="Luedi P."/>
            <person name="Oefner P.J."/>
            <person name="David L."/>
            <person name="Dietrich F.S."/>
            <person name="Li Y."/>
            <person name="Davis R.W."/>
            <person name="Steinmetz L.M."/>
        </authorList>
    </citation>
    <scope>NUCLEOTIDE SEQUENCE [LARGE SCALE GENOMIC DNA]</scope>
    <source>
        <strain>YJM789</strain>
    </source>
</reference>
<organism>
    <name type="scientific">Saccharomyces cerevisiae (strain YJM789)</name>
    <name type="common">Baker's yeast</name>
    <dbReference type="NCBI Taxonomy" id="307796"/>
    <lineage>
        <taxon>Eukaryota</taxon>
        <taxon>Fungi</taxon>
        <taxon>Dikarya</taxon>
        <taxon>Ascomycota</taxon>
        <taxon>Saccharomycotina</taxon>
        <taxon>Saccharomycetes</taxon>
        <taxon>Saccharomycetales</taxon>
        <taxon>Saccharomycetaceae</taxon>
        <taxon>Saccharomyces</taxon>
    </lineage>
</organism>
<dbReference type="EMBL" id="AAFW02000067">
    <property type="protein sequence ID" value="EDN62549.1"/>
    <property type="molecule type" value="Genomic_DNA"/>
</dbReference>
<dbReference type="HOGENOM" id="CLU_006977_1_0_1"/>
<dbReference type="Proteomes" id="UP000007060">
    <property type="component" value="Unassembled WGS sequence"/>
</dbReference>
<dbReference type="GO" id="GO:0005935">
    <property type="term" value="C:cellular bud neck"/>
    <property type="evidence" value="ECO:0007669"/>
    <property type="project" value="UniProtKB-SubCell"/>
</dbReference>
<dbReference type="GO" id="GO:0005737">
    <property type="term" value="C:cytoplasm"/>
    <property type="evidence" value="ECO:0007669"/>
    <property type="project" value="UniProtKB-SubCell"/>
</dbReference>
<dbReference type="GO" id="GO:0005634">
    <property type="term" value="C:nucleus"/>
    <property type="evidence" value="ECO:0007669"/>
    <property type="project" value="UniProtKB-SubCell"/>
</dbReference>
<dbReference type="Gene3D" id="2.30.29.30">
    <property type="entry name" value="Pleckstrin-homology domain (PH domain)/Phosphotyrosine-binding domain (PTB)"/>
    <property type="match status" value="1"/>
</dbReference>
<dbReference type="InterPro" id="IPR011993">
    <property type="entry name" value="PH-like_dom_sf"/>
</dbReference>
<dbReference type="InterPro" id="IPR001849">
    <property type="entry name" value="PH_domain"/>
</dbReference>
<dbReference type="Pfam" id="PF00169">
    <property type="entry name" value="PH"/>
    <property type="match status" value="1"/>
</dbReference>
<dbReference type="Pfam" id="PF25381">
    <property type="entry name" value="PH_26"/>
    <property type="match status" value="1"/>
</dbReference>
<dbReference type="SMART" id="SM00233">
    <property type="entry name" value="PH"/>
    <property type="match status" value="1"/>
</dbReference>
<dbReference type="SUPFAM" id="SSF50729">
    <property type="entry name" value="PH domain-like"/>
    <property type="match status" value="1"/>
</dbReference>
<dbReference type="PROSITE" id="PS50003">
    <property type="entry name" value="PH_DOMAIN"/>
    <property type="match status" value="1"/>
</dbReference>
<gene>
    <name type="primary">CAF120</name>
    <name type="ORF">SCY_4528</name>
</gene>
<name>CA120_YEAS7</name>
<evidence type="ECO:0000250" key="1"/>
<evidence type="ECO:0000250" key="2">
    <source>
        <dbReference type="UniProtKB" id="P53836"/>
    </source>
</evidence>
<evidence type="ECO:0000255" key="3">
    <source>
        <dbReference type="PROSITE-ProRule" id="PRU00145"/>
    </source>
</evidence>
<evidence type="ECO:0000256" key="4">
    <source>
        <dbReference type="SAM" id="MobiDB-lite"/>
    </source>
</evidence>
<evidence type="ECO:0000305" key="5"/>
<feature type="chain" id="PRO_0000324853" description="CCR4-NOT transcriptional complex subunit CAF120">
    <location>
        <begin position="1"/>
        <end position="1060"/>
    </location>
</feature>
<feature type="domain" description="PH" evidence="3">
    <location>
        <begin position="75"/>
        <end position="204"/>
    </location>
</feature>
<feature type="region of interest" description="Disordered" evidence="4">
    <location>
        <begin position="1"/>
        <end position="29"/>
    </location>
</feature>
<feature type="region of interest" description="Disordered" evidence="4">
    <location>
        <begin position="465"/>
        <end position="588"/>
    </location>
</feature>
<feature type="region of interest" description="Disordered" evidence="4">
    <location>
        <begin position="718"/>
        <end position="742"/>
    </location>
</feature>
<feature type="region of interest" description="Disordered" evidence="4">
    <location>
        <begin position="801"/>
        <end position="1060"/>
    </location>
</feature>
<feature type="compositionally biased region" description="Low complexity" evidence="4">
    <location>
        <begin position="465"/>
        <end position="481"/>
    </location>
</feature>
<feature type="compositionally biased region" description="Polar residues" evidence="4">
    <location>
        <begin position="490"/>
        <end position="504"/>
    </location>
</feature>
<feature type="compositionally biased region" description="Basic and acidic residues" evidence="4">
    <location>
        <begin position="571"/>
        <end position="588"/>
    </location>
</feature>
<feature type="compositionally biased region" description="Low complexity" evidence="4">
    <location>
        <begin position="718"/>
        <end position="731"/>
    </location>
</feature>
<feature type="compositionally biased region" description="Basic and acidic residues" evidence="4">
    <location>
        <begin position="801"/>
        <end position="814"/>
    </location>
</feature>
<feature type="compositionally biased region" description="Polar residues" evidence="4">
    <location>
        <begin position="845"/>
        <end position="883"/>
    </location>
</feature>
<feature type="compositionally biased region" description="Polar residues" evidence="4">
    <location>
        <begin position="900"/>
        <end position="923"/>
    </location>
</feature>
<feature type="compositionally biased region" description="Polar residues" evidence="4">
    <location>
        <begin position="931"/>
        <end position="945"/>
    </location>
</feature>
<feature type="compositionally biased region" description="Polar residues" evidence="4">
    <location>
        <begin position="1048"/>
        <end position="1060"/>
    </location>
</feature>
<feature type="modified residue" description="Phosphoserine" evidence="2">
    <location>
        <position position="491"/>
    </location>
</feature>
<feature type="modified residue" description="Phosphoserine" evidence="2">
    <location>
        <position position="510"/>
    </location>
</feature>
<feature type="modified residue" description="Phosphoserine" evidence="2">
    <location>
        <position position="518"/>
    </location>
</feature>
<feature type="modified residue" description="Phosphoserine" evidence="2">
    <location>
        <position position="538"/>
    </location>
</feature>
<feature type="modified residue" description="Phosphoserine" evidence="2">
    <location>
        <position position="556"/>
    </location>
</feature>
<feature type="modified residue" description="Phosphoserine" evidence="2">
    <location>
        <position position="871"/>
    </location>
</feature>
<feature type="modified residue" description="Phosphoserine" evidence="2">
    <location>
        <position position="885"/>
    </location>
</feature>
<keyword id="KW-0010">Activator</keyword>
<keyword id="KW-0963">Cytoplasm</keyword>
<keyword id="KW-0539">Nucleus</keyword>
<keyword id="KW-0597">Phosphoprotein</keyword>
<keyword id="KW-0678">Repressor</keyword>
<keyword id="KW-0804">Transcription</keyword>
<keyword id="KW-0805">Transcription regulation</keyword>
<sequence length="1060" mass="118264">MRIFSGDNKVVDSPASNPGLMSPSNFGGDFGSRLKVNVTSKKKLNDSSPTSPMESSPVSPELVPILTLLNAHTHRRYHEGVFLILQDLNNNGTHAARKWKDVYGVLLGTQLALWDAKELAEFTDPSCPVSEKKLKEVASKPTYINLTDATLRTLDNSDNIVMECGKNLTNALVVSTTLKNRYFLQFGNKESFNAWNSAIRLCLYECSSLQEAYTGAFISSRGAKLGDIRILLTNRKYDYKDWVSVRFGAGMPWKRCYAVISQSSSKKKGHFGEINLYENDKKVKKNHAMATIVEAKALYAVYPSSPKLIDSSTIIKVVGSVKFEKKESAQEKDVFIMPEKHQAVPSYDTIIRFLIPAMDTFKLYGRPEKLLSSKNDPHSLLFGLPVLPHIYYLEVEDLLPLTNSVSSLHWSNNEWKEHISDILQRKIAQGYCGCNSTSNITSPLPSPFLGSADLFERADGVLSPKLSYGSKSSSNNSSKNSLPKRERVKLSSSSEQDLNNSDSPSIKRESPPLVISESPHKVHTPTDASFRTRVTEGSPYAKQRHPKAFASSVNDSPSDRAKSRTVPYNNNDRKATTPEKFERGETSCGKNVDESLKKVRNMKLEIPESNFDKFMTDKNLLSVDSKSSNEKKLSVESDLSAIYEKYSNGPFGHTEGLNGSSDETYLRFQRASVHSESNYNSRKSFTPSDFSNGNEEEHAVLQELNSLTQRINELGMESINSNSDSDRINGSYSQVDFDNNNDEDDMNLFDPDFMAQDQLRAEERDYNKDDRTPLAKVPAAFQSTGLGITPDDDIERQYITEHRSRHEVPKRSPEKPSNPLEIGNPYAKPGTRLNTTHTHSKTDRSITPQRGQPVPSGQQISSYVQPANINSPNKMYGANNSAMGSPRNPKTRAPPGPYNQGWNNRPSPSNIYQRPHPSDTQPQAYHLPGNPYSTGNRPNMQAQYHPQQVPMPIPQQPNRPYQPYAMNTHMGSPGGYAGAAPPFQPANVNYNTRPQQPWPTPNSPSAHYRPPPNLNQPQNGSAGYYRPPAPQLQNSQARPQKKDGFSQFMPSATTKNPYAQ</sequence>
<proteinExistence type="inferred from homology"/>
<accession>A6ZRG7</accession>